<reference key="1">
    <citation type="submission" date="2007-02" db="EMBL/GenBank/DDBJ databases">
        <title>Complete sequence of Pyrobaculum calidifontis JCM 11548.</title>
        <authorList>
            <consortium name="US DOE Joint Genome Institute"/>
            <person name="Copeland A."/>
            <person name="Lucas S."/>
            <person name="Lapidus A."/>
            <person name="Barry K."/>
            <person name="Glavina del Rio T."/>
            <person name="Dalin E."/>
            <person name="Tice H."/>
            <person name="Pitluck S."/>
            <person name="Chain P."/>
            <person name="Malfatti S."/>
            <person name="Shin M."/>
            <person name="Vergez L."/>
            <person name="Schmutz J."/>
            <person name="Larimer F."/>
            <person name="Land M."/>
            <person name="Hauser L."/>
            <person name="Kyrpides N."/>
            <person name="Mikhailova N."/>
            <person name="Cozen A.E."/>
            <person name="Fitz-Gibbon S.T."/>
            <person name="House C.H."/>
            <person name="Saltikov C."/>
            <person name="Lowe T.M."/>
            <person name="Richardson P."/>
        </authorList>
    </citation>
    <scope>NUCLEOTIDE SEQUENCE [LARGE SCALE GENOMIC DNA]</scope>
    <source>
        <strain>DSM 21063 / JCM 11548 / VA1</strain>
    </source>
</reference>
<reference key="2">
    <citation type="journal article" date="2011" name="Mol. Microbiol.">
        <title>An actin-based cytoskeleton in archaea.</title>
        <authorList>
            <person name="Ettema T.J."/>
            <person name="Lindaas A.C."/>
            <person name="Bernander R."/>
        </authorList>
    </citation>
    <scope>FUNCTION</scope>
    <scope>SUBCELLULAR LOCATION</scope>
</reference>
<reference evidence="7" key="3">
    <citation type="journal article" date="2016" name="Elife">
        <title>Crenactin forms actin-like double helical filaments regulated by arcadin-2.</title>
        <authorList>
            <person name="Izore T."/>
            <person name="Kureisaite-Ciziene D."/>
            <person name="McLaughlin S.H."/>
            <person name="Lowe J."/>
        </authorList>
    </citation>
    <scope>X-RAY CRYSTALLOGRAPHY (1.60 ANGSTROMS) OF 188-203 IN COMPLEX WITH CRENACTIN</scope>
    <scope>FUNCTION</scope>
    <scope>INTERACTION WITH CRENACTIN</scope>
    <scope>DOMAIN</scope>
</reference>
<gene>
    <name evidence="3" type="primary">rkd-2</name>
    <name evidence="6" type="ordered locus">Pcal_1636</name>
</gene>
<dbReference type="EMBL" id="CP000561">
    <property type="protein sequence ID" value="ABO09053.1"/>
    <property type="molecule type" value="Genomic_DNA"/>
</dbReference>
<dbReference type="RefSeq" id="WP_011850311.1">
    <property type="nucleotide sequence ID" value="NC_009073.1"/>
</dbReference>
<dbReference type="PDB" id="5LY3">
    <property type="method" value="X-ray"/>
    <property type="resolution" value="1.60 A"/>
    <property type="chains" value="B=188-203"/>
</dbReference>
<dbReference type="PDBsum" id="5LY3"/>
<dbReference type="SMR" id="A3MWN6"/>
<dbReference type="STRING" id="410359.Pcal_1636"/>
<dbReference type="GeneID" id="4908474"/>
<dbReference type="KEGG" id="pcl:Pcal_1636"/>
<dbReference type="eggNOG" id="arCOG05584">
    <property type="taxonomic scope" value="Archaea"/>
</dbReference>
<dbReference type="HOGENOM" id="CLU_1340791_0_0_2"/>
<dbReference type="OrthoDB" id="27975at2157"/>
<dbReference type="Proteomes" id="UP000001431">
    <property type="component" value="Chromosome"/>
</dbReference>
<dbReference type="GO" id="GO:0005737">
    <property type="term" value="C:cytoplasm"/>
    <property type="evidence" value="ECO:0007669"/>
    <property type="project" value="UniProtKB-KW"/>
</dbReference>
<dbReference type="GO" id="GO:0005856">
    <property type="term" value="C:cytoskeleton"/>
    <property type="evidence" value="ECO:0007669"/>
    <property type="project" value="UniProtKB-SubCell"/>
</dbReference>
<protein>
    <recommendedName>
        <fullName evidence="3">Arcadin-2</fullName>
    </recommendedName>
</protein>
<evidence type="ECO:0000269" key="1">
    <source>
    </source>
</evidence>
<evidence type="ECO:0000269" key="2">
    <source>
    </source>
</evidence>
<evidence type="ECO:0000303" key="3">
    <source>
    </source>
</evidence>
<evidence type="ECO:0000305" key="4"/>
<evidence type="ECO:0000305" key="5">
    <source>
    </source>
</evidence>
<evidence type="ECO:0000312" key="6">
    <source>
        <dbReference type="EMBL" id="ABO09053.1"/>
    </source>
</evidence>
<evidence type="ECO:0007744" key="7">
    <source>
        <dbReference type="PDB" id="5LY3"/>
    </source>
</evidence>
<evidence type="ECO:0007829" key="8">
    <source>
        <dbReference type="PDB" id="5LY3"/>
    </source>
</evidence>
<comment type="function">
    <text evidence="1 2">Part of an actin-like archaeal cytoskeleton (PubMed:21414041). Prevents polymerization of crenactin filaments by binding its C-terminus into crenactin's hydrophobic groove. May act by competing with the D-loop of the following crenactin subunit for the hydrophobic groove (PubMed:27852434).</text>
</comment>
<comment type="subunit">
    <text evidence="2">Interacts with crenactin.</text>
</comment>
<comment type="subcellular location">
    <subcellularLocation>
        <location evidence="4">Cytoplasm</location>
        <location evidence="4">Cytoskeleton</location>
    </subcellularLocation>
    <text evidence="1">Localizes between segregated nucleoids.</text>
</comment>
<comment type="domain">
    <text evidence="2">The C-terminal helix is essential for activity.</text>
</comment>
<comment type="miscellaneous">
    <text evidence="5">Belongs to a conserved five-gene operon within Thermoproteales denoted Arcade (actin-related cytoskeleton in Archaea involved in shape determination).</text>
</comment>
<organism>
    <name type="scientific">Pyrobaculum calidifontis (strain DSM 21063 / JCM 11548 / VA1)</name>
    <dbReference type="NCBI Taxonomy" id="410359"/>
    <lineage>
        <taxon>Archaea</taxon>
        <taxon>Thermoproteota</taxon>
        <taxon>Thermoprotei</taxon>
        <taxon>Thermoproteales</taxon>
        <taxon>Thermoproteaceae</taxon>
        <taxon>Pyrobaculum</taxon>
    </lineage>
</organism>
<name>RKD2_PYRCJ</name>
<feature type="chain" id="PRO_0000439073" description="Arcadin-2">
    <location>
        <begin position="1"/>
        <end position="203"/>
    </location>
</feature>
<feature type="helix" evidence="8">
    <location>
        <begin position="195"/>
        <end position="200"/>
    </location>
</feature>
<accession>A3MWN6</accession>
<sequence length="203" mass="22555">MDFPKVLLIRHFTEVLGMKYAGEGGEVLWFEEGLNRVAVGIYFTDLYEEAELYKRVGALMGLGASKVFLAVLPDALAFVDPRYFKANGVGLVVVDPAKGVDGVEVKIFARARPAAVEPLKIDAVKAALHEYLASELKRVEESLFEKVRRYVDQRVEEVKRALQAVEEAKRAAPPVQRAAAESAQEPRGGIGENEWVKILRSKR</sequence>
<proteinExistence type="evidence at protein level"/>
<keyword id="KW-0002">3D-structure</keyword>
<keyword id="KW-0963">Cytoplasm</keyword>
<keyword id="KW-0206">Cytoskeleton</keyword>